<proteinExistence type="evidence at protein level"/>
<dbReference type="EMBL" id="AB073862">
    <property type="protein sequence ID" value="BAB71780.1"/>
    <property type="molecule type" value="mRNA"/>
</dbReference>
<dbReference type="EMBL" id="AK027241">
    <property type="protein sequence ID" value="BAB15703.1"/>
    <property type="molecule type" value="mRNA"/>
</dbReference>
<dbReference type="EMBL" id="AK292411">
    <property type="protein sequence ID" value="BAF85100.1"/>
    <property type="molecule type" value="mRNA"/>
</dbReference>
<dbReference type="EMBL" id="AK292498">
    <property type="protein sequence ID" value="BAF85187.1"/>
    <property type="molecule type" value="mRNA"/>
</dbReference>
<dbReference type="EMBL" id="AL355841">
    <property type="protein sequence ID" value="CAB91065.1"/>
    <property type="molecule type" value="mRNA"/>
</dbReference>
<dbReference type="EMBL" id="AL023801">
    <property type="status" value="NOT_ANNOTATED_CDS"/>
    <property type="molecule type" value="Genomic_DNA"/>
</dbReference>
<dbReference type="EMBL" id="AL031843">
    <property type="status" value="NOT_ANNOTATED_CDS"/>
    <property type="molecule type" value="Genomic_DNA"/>
</dbReference>
<dbReference type="EMBL" id="AL118498">
    <property type="status" value="NOT_ANNOTATED_CDS"/>
    <property type="molecule type" value="Genomic_DNA"/>
</dbReference>
<dbReference type="EMBL" id="Z82201">
    <property type="status" value="NOT_ANNOTATED_CDS"/>
    <property type="molecule type" value="Genomic_DNA"/>
</dbReference>
<dbReference type="EMBL" id="Z97055">
    <property type="status" value="NOT_ANNOTATED_CDS"/>
    <property type="molecule type" value="Genomic_DNA"/>
</dbReference>
<dbReference type="EMBL" id="BC039315">
    <property type="protein sequence ID" value="AAH39315.1"/>
    <property type="molecule type" value="mRNA"/>
</dbReference>
<dbReference type="EMBL" id="AB051459">
    <property type="protein sequence ID" value="BAB33342.1"/>
    <property type="molecule type" value="mRNA"/>
</dbReference>
<dbReference type="CCDS" id="CCDS14049.1">
    <molecule id="Q5THR3-1"/>
</dbReference>
<dbReference type="CCDS" id="CCDS14050.1">
    <molecule id="Q5THR3-2"/>
</dbReference>
<dbReference type="RefSeq" id="NP_073622.2">
    <molecule id="Q5THR3-1"/>
    <property type="nucleotide sequence ID" value="NM_022785.3"/>
</dbReference>
<dbReference type="RefSeq" id="NP_942153.1">
    <molecule id="Q5THR3-2"/>
    <property type="nucleotide sequence ID" value="NM_198856.3"/>
</dbReference>
<dbReference type="PDB" id="1WLZ">
    <property type="method" value="X-ray"/>
    <property type="resolution" value="1.60 A"/>
    <property type="chains" value="A/B/C/D=1160-1260"/>
</dbReference>
<dbReference type="PDB" id="5D67">
    <property type="method" value="X-ray"/>
    <property type="resolution" value="2.00 A"/>
    <property type="chains" value="A/B/C/D=1160-1260"/>
</dbReference>
<dbReference type="PDBsum" id="1WLZ"/>
<dbReference type="PDBsum" id="5D67"/>
<dbReference type="SMR" id="Q5THR3"/>
<dbReference type="BioGRID" id="122306">
    <property type="interactions" value="8"/>
</dbReference>
<dbReference type="CORUM" id="Q5THR3"/>
<dbReference type="FunCoup" id="Q5THR3">
    <property type="interactions" value="545"/>
</dbReference>
<dbReference type="IntAct" id="Q5THR3">
    <property type="interactions" value="1"/>
</dbReference>
<dbReference type="STRING" id="9606.ENSP00000262726"/>
<dbReference type="GlyGen" id="Q5THR3">
    <property type="glycosylation" value="3 sites, 1 O-linked glycan (1 site)"/>
</dbReference>
<dbReference type="iPTMnet" id="Q5THR3"/>
<dbReference type="PhosphoSitePlus" id="Q5THR3"/>
<dbReference type="BioMuta" id="EFCAB6"/>
<dbReference type="DMDM" id="74756634"/>
<dbReference type="MassIVE" id="Q5THR3"/>
<dbReference type="PaxDb" id="9606-ENSP00000262726"/>
<dbReference type="PeptideAtlas" id="Q5THR3"/>
<dbReference type="ProteomicsDB" id="65162">
    <molecule id="Q5THR3-1"/>
</dbReference>
<dbReference type="ProteomicsDB" id="65163">
    <molecule id="Q5THR3-2"/>
</dbReference>
<dbReference type="ProteomicsDB" id="65164">
    <molecule id="Q5THR3-3"/>
</dbReference>
<dbReference type="ProteomicsDB" id="65165">
    <molecule id="Q5THR3-4"/>
</dbReference>
<dbReference type="ProteomicsDB" id="65166">
    <molecule id="Q5THR3-5"/>
</dbReference>
<dbReference type="ProteomicsDB" id="65167">
    <molecule id="Q5THR3-6"/>
</dbReference>
<dbReference type="Antibodypedia" id="320">
    <property type="antibodies" value="24 antibodies from 9 providers"/>
</dbReference>
<dbReference type="DNASU" id="64800"/>
<dbReference type="Ensembl" id="ENST00000262726.12">
    <molecule id="Q5THR3-1"/>
    <property type="protein sequence ID" value="ENSP00000262726.7"/>
    <property type="gene ID" value="ENSG00000186976.15"/>
</dbReference>
<dbReference type="Ensembl" id="ENST00000396231.6">
    <molecule id="Q5THR3-2"/>
    <property type="protein sequence ID" value="ENSP00000379533.2"/>
    <property type="gene ID" value="ENSG00000186976.15"/>
</dbReference>
<dbReference type="GeneID" id="64800"/>
<dbReference type="KEGG" id="hsa:64800"/>
<dbReference type="MANE-Select" id="ENST00000262726.12">
    <property type="protein sequence ID" value="ENSP00000262726.7"/>
    <property type="RefSeq nucleotide sequence ID" value="NM_022785.4"/>
    <property type="RefSeq protein sequence ID" value="NP_073622.2"/>
</dbReference>
<dbReference type="UCSC" id="uc003bdy.3">
    <molecule id="Q5THR3-1"/>
    <property type="organism name" value="human"/>
</dbReference>
<dbReference type="AGR" id="HGNC:24204"/>
<dbReference type="CTD" id="64800"/>
<dbReference type="DisGeNET" id="64800"/>
<dbReference type="GeneCards" id="EFCAB6"/>
<dbReference type="HGNC" id="HGNC:24204">
    <property type="gene designation" value="EFCAB6"/>
</dbReference>
<dbReference type="HPA" id="ENSG00000186976">
    <property type="expression patterns" value="Group enriched (fallopian tube, testis)"/>
</dbReference>
<dbReference type="MalaCards" id="EFCAB6"/>
<dbReference type="MIM" id="619664">
    <property type="type" value="gene"/>
</dbReference>
<dbReference type="neXtProt" id="NX_Q5THR3"/>
<dbReference type="OpenTargets" id="ENSG00000186976"/>
<dbReference type="PharmGKB" id="PA162384324"/>
<dbReference type="VEuPathDB" id="HostDB:ENSG00000186976"/>
<dbReference type="eggNOG" id="KOG0027">
    <property type="taxonomic scope" value="Eukaryota"/>
</dbReference>
<dbReference type="GeneTree" id="ENSGT00390000013629"/>
<dbReference type="HOGENOM" id="CLU_004260_0_0_1"/>
<dbReference type="InParanoid" id="Q5THR3"/>
<dbReference type="OMA" id="NLCEKRS"/>
<dbReference type="OrthoDB" id="26525at2759"/>
<dbReference type="PAN-GO" id="Q5THR3">
    <property type="GO annotations" value="1 GO annotation based on evolutionary models"/>
</dbReference>
<dbReference type="PhylomeDB" id="Q5THR3"/>
<dbReference type="TreeFam" id="TF329179"/>
<dbReference type="PathwayCommons" id="Q5THR3"/>
<dbReference type="SignaLink" id="Q5THR3"/>
<dbReference type="BioGRID-ORCS" id="64800">
    <property type="hits" value="4 hits in 1149 CRISPR screens"/>
</dbReference>
<dbReference type="ChiTaRS" id="EFCAB6">
    <property type="organism name" value="human"/>
</dbReference>
<dbReference type="EvolutionaryTrace" id="Q5THR3"/>
<dbReference type="GeneWiki" id="EFCAB6"/>
<dbReference type="GenomeRNAi" id="64800"/>
<dbReference type="Pharos" id="Q5THR3">
    <property type="development level" value="Tdark"/>
</dbReference>
<dbReference type="PRO" id="PR:Q5THR3"/>
<dbReference type="Proteomes" id="UP000005640">
    <property type="component" value="Chromosome 22"/>
</dbReference>
<dbReference type="RNAct" id="Q5THR3">
    <property type="molecule type" value="protein"/>
</dbReference>
<dbReference type="Bgee" id="ENSG00000186976">
    <property type="expression patterns" value="Expressed in left testis and 109 other cell types or tissues"/>
</dbReference>
<dbReference type="ExpressionAtlas" id="Q5THR3">
    <property type="expression patterns" value="baseline and differential"/>
</dbReference>
<dbReference type="GO" id="GO:0160111">
    <property type="term" value="C:axonemal A tubule inner sheath"/>
    <property type="evidence" value="ECO:0007669"/>
    <property type="project" value="Ensembl"/>
</dbReference>
<dbReference type="GO" id="GO:0005654">
    <property type="term" value="C:nucleoplasm"/>
    <property type="evidence" value="ECO:0000314"/>
    <property type="project" value="HPA"/>
</dbReference>
<dbReference type="GO" id="GO:0036126">
    <property type="term" value="C:sperm flagellum"/>
    <property type="evidence" value="ECO:0000250"/>
    <property type="project" value="UniProtKB"/>
</dbReference>
<dbReference type="GO" id="GO:0005509">
    <property type="term" value="F:calcium ion binding"/>
    <property type="evidence" value="ECO:0007669"/>
    <property type="project" value="InterPro"/>
</dbReference>
<dbReference type="GO" id="GO:0030317">
    <property type="term" value="P:flagellated sperm motility"/>
    <property type="evidence" value="ECO:0000250"/>
    <property type="project" value="UniProtKB"/>
</dbReference>
<dbReference type="FunFam" id="1.10.238.10:FF:000242">
    <property type="entry name" value="EF-hand calcium binding domain 6"/>
    <property type="match status" value="1"/>
</dbReference>
<dbReference type="FunFam" id="1.10.238.10:FF:000243">
    <property type="entry name" value="EF-hand calcium binding domain 6"/>
    <property type="match status" value="1"/>
</dbReference>
<dbReference type="FunFam" id="1.10.238.10:FF:000325">
    <property type="entry name" value="EF-hand calcium binding domain 6"/>
    <property type="match status" value="1"/>
</dbReference>
<dbReference type="FunFam" id="1.10.238.10:FF:000342">
    <property type="entry name" value="EF-hand calcium binding domain 6"/>
    <property type="match status" value="1"/>
</dbReference>
<dbReference type="FunFam" id="1.10.238.10:FF:000492">
    <property type="entry name" value="EF-hand calcium binding domain 6"/>
    <property type="match status" value="1"/>
</dbReference>
<dbReference type="FunFam" id="1.10.238.10:FF:000121">
    <property type="entry name" value="EF-hand calcium-binding domain-containing protein 6"/>
    <property type="match status" value="2"/>
</dbReference>
<dbReference type="FunFam" id="1.10.238.10:FF:000179">
    <property type="entry name" value="EF-hand calcium-binding domain-containing protein 6"/>
    <property type="match status" value="1"/>
</dbReference>
<dbReference type="FunFam" id="1.10.238.10:FF:000240">
    <property type="entry name" value="EF-hand calcium-binding domain-containing protein 6"/>
    <property type="match status" value="1"/>
</dbReference>
<dbReference type="FunFam" id="1.10.238.10:FF:000285">
    <property type="entry name" value="EF-hand calcium-binding domain-containing protein 6"/>
    <property type="match status" value="1"/>
</dbReference>
<dbReference type="Gene3D" id="1.10.238.10">
    <property type="entry name" value="EF-hand"/>
    <property type="match status" value="11"/>
</dbReference>
<dbReference type="InterPro" id="IPR011992">
    <property type="entry name" value="EF-hand-dom_pair"/>
</dbReference>
<dbReference type="InterPro" id="IPR018247">
    <property type="entry name" value="EF_Hand_1_Ca_BS"/>
</dbReference>
<dbReference type="InterPro" id="IPR015070">
    <property type="entry name" value="EF_hand_DJBP"/>
</dbReference>
<dbReference type="InterPro" id="IPR002048">
    <property type="entry name" value="EF_hand_dom"/>
</dbReference>
<dbReference type="InterPro" id="IPR052603">
    <property type="entry name" value="EFCB6"/>
</dbReference>
<dbReference type="PANTHER" id="PTHR20875:SF2">
    <property type="entry name" value="EF-HAND CALCIUM-BINDING DOMAIN-CONTAINING PROTEIN 6"/>
    <property type="match status" value="1"/>
</dbReference>
<dbReference type="PANTHER" id="PTHR20875">
    <property type="entry name" value="EF-HAND CALCIUM-BINDING DOMAIN-CONTAINING PROTEIN 6-RELATED"/>
    <property type="match status" value="1"/>
</dbReference>
<dbReference type="Pfam" id="PF08976">
    <property type="entry name" value="EF-hand_11"/>
    <property type="match status" value="2"/>
</dbReference>
<dbReference type="Pfam" id="PF13499">
    <property type="entry name" value="EF-hand_7"/>
    <property type="match status" value="1"/>
</dbReference>
<dbReference type="Pfam" id="PF13833">
    <property type="entry name" value="EF-hand_8"/>
    <property type="match status" value="1"/>
</dbReference>
<dbReference type="SMART" id="SM00054">
    <property type="entry name" value="EFh"/>
    <property type="match status" value="12"/>
</dbReference>
<dbReference type="SUPFAM" id="SSF47473">
    <property type="entry name" value="EF-hand"/>
    <property type="match status" value="7"/>
</dbReference>
<dbReference type="PROSITE" id="PS00018">
    <property type="entry name" value="EF_HAND_1"/>
    <property type="match status" value="1"/>
</dbReference>
<dbReference type="PROSITE" id="PS50222">
    <property type="entry name" value="EF_HAND_2"/>
    <property type="match status" value="17"/>
</dbReference>
<name>EFCB6_HUMAN</name>
<evidence type="ECO:0000250" key="1">
    <source>
        <dbReference type="UniProtKB" id="Q6P1E8"/>
    </source>
</evidence>
<evidence type="ECO:0000255" key="2">
    <source>
        <dbReference type="PROSITE-ProRule" id="PRU00448"/>
    </source>
</evidence>
<evidence type="ECO:0000256" key="3">
    <source>
        <dbReference type="SAM" id="MobiDB-lite"/>
    </source>
</evidence>
<evidence type="ECO:0000269" key="4">
    <source>
    </source>
</evidence>
<evidence type="ECO:0000269" key="5">
    <source>
    </source>
</evidence>
<evidence type="ECO:0000269" key="6">
    <source>
    </source>
</evidence>
<evidence type="ECO:0000303" key="7">
    <source>
    </source>
</evidence>
<evidence type="ECO:0000303" key="8">
    <source>
    </source>
</evidence>
<evidence type="ECO:0000303" key="9">
    <source>
    </source>
</evidence>
<evidence type="ECO:0000303" key="10">
    <source>
    </source>
</evidence>
<evidence type="ECO:0000303" key="11">
    <source>
    </source>
</evidence>
<evidence type="ECO:0000305" key="12"/>
<evidence type="ECO:0000312" key="13">
    <source>
        <dbReference type="HGNC" id="HGNC:24204"/>
    </source>
</evidence>
<evidence type="ECO:0007829" key="14">
    <source>
        <dbReference type="PDB" id="1WLZ"/>
    </source>
</evidence>
<evidence type="ECO:0007829" key="15">
    <source>
        <dbReference type="PDB" id="5D67"/>
    </source>
</evidence>
<keyword id="KW-0002">3D-structure</keyword>
<keyword id="KW-0025">Alternative splicing</keyword>
<keyword id="KW-0106">Calcium</keyword>
<keyword id="KW-0966">Cell projection</keyword>
<keyword id="KW-0969">Cilium</keyword>
<keyword id="KW-0963">Cytoplasm</keyword>
<keyword id="KW-0206">Cytoskeleton</keyword>
<keyword id="KW-0282">Flagellum</keyword>
<keyword id="KW-0479">Metal-binding</keyword>
<keyword id="KW-0539">Nucleus</keyword>
<keyword id="KW-0597">Phosphoprotein</keyword>
<keyword id="KW-1267">Proteomics identification</keyword>
<keyword id="KW-1185">Reference proteome</keyword>
<keyword id="KW-0677">Repeat</keyword>
<keyword id="KW-0678">Repressor</keyword>
<keyword id="KW-0804">Transcription</keyword>
<keyword id="KW-0805">Transcription regulation</keyword>
<gene>
    <name evidence="13" type="primary">EFCAB6</name>
    <name type="synonym">DJBP</name>
    <name type="synonym">KIAA1672</name>
</gene>
<protein>
    <recommendedName>
        <fullName>EF-hand calcium-binding domain-containing protein 6</fullName>
    </recommendedName>
    <alternativeName>
        <fullName>CAP-binding protein complex-interacting protein 1</fullName>
    </alternativeName>
    <alternativeName>
        <fullName>DJ-1-binding protein</fullName>
        <shortName>DJBP</shortName>
    </alternativeName>
</protein>
<reference key="1">
    <citation type="journal article" date="2003" name="Mol. Cancer Res.">
        <title>DJBP: a novel DJ-1-binding protein, negatively regulates the androgen receptor by recruiting histone deacetylase complex, and DJ-1 antagonizes this inhibition by abrogation of this complex.</title>
        <authorList>
            <person name="Niki T."/>
            <person name="Takahashi-Niki K."/>
            <person name="Taira T."/>
            <person name="Iguchi-Ariga S.M.M."/>
            <person name="Ariga H."/>
        </authorList>
    </citation>
    <scope>NUCLEOTIDE SEQUENCE [MRNA] (ISOFORM 3)</scope>
    <scope>FUNCTION</scope>
    <scope>SUBCELLULAR LOCATION</scope>
    <scope>TISSUE SPECIFICITY</scope>
    <scope>INTERACTION WITH PARK7 AND AR</scope>
    <scope>VARIANT VAL-1059</scope>
    <source>
        <tissue>Testis</tissue>
    </source>
</reference>
<reference key="2">
    <citation type="journal article" date="2004" name="Nat. Genet.">
        <title>Complete sequencing and characterization of 21,243 full-length human cDNAs.</title>
        <authorList>
            <person name="Ota T."/>
            <person name="Suzuki Y."/>
            <person name="Nishikawa T."/>
            <person name="Otsuki T."/>
            <person name="Sugiyama T."/>
            <person name="Irie R."/>
            <person name="Wakamatsu A."/>
            <person name="Hayashi K."/>
            <person name="Sato H."/>
            <person name="Nagai K."/>
            <person name="Kimura K."/>
            <person name="Makita H."/>
            <person name="Sekine M."/>
            <person name="Obayashi M."/>
            <person name="Nishi T."/>
            <person name="Shibahara T."/>
            <person name="Tanaka T."/>
            <person name="Ishii S."/>
            <person name="Yamamoto J."/>
            <person name="Saito K."/>
            <person name="Kawai Y."/>
            <person name="Isono Y."/>
            <person name="Nakamura Y."/>
            <person name="Nagahari K."/>
            <person name="Murakami K."/>
            <person name="Yasuda T."/>
            <person name="Iwayanagi T."/>
            <person name="Wagatsuma M."/>
            <person name="Shiratori A."/>
            <person name="Sudo H."/>
            <person name="Hosoiri T."/>
            <person name="Kaku Y."/>
            <person name="Kodaira H."/>
            <person name="Kondo H."/>
            <person name="Sugawara M."/>
            <person name="Takahashi M."/>
            <person name="Kanda K."/>
            <person name="Yokoi T."/>
            <person name="Furuya T."/>
            <person name="Kikkawa E."/>
            <person name="Omura Y."/>
            <person name="Abe K."/>
            <person name="Kamihara K."/>
            <person name="Katsuta N."/>
            <person name="Sato K."/>
            <person name="Tanikawa M."/>
            <person name="Yamazaki M."/>
            <person name="Ninomiya K."/>
            <person name="Ishibashi T."/>
            <person name="Yamashita H."/>
            <person name="Murakawa K."/>
            <person name="Fujimori K."/>
            <person name="Tanai H."/>
            <person name="Kimata M."/>
            <person name="Watanabe M."/>
            <person name="Hiraoka S."/>
            <person name="Chiba Y."/>
            <person name="Ishida S."/>
            <person name="Ono Y."/>
            <person name="Takiguchi S."/>
            <person name="Watanabe S."/>
            <person name="Yosida M."/>
            <person name="Hotuta T."/>
            <person name="Kusano J."/>
            <person name="Kanehori K."/>
            <person name="Takahashi-Fujii A."/>
            <person name="Hara H."/>
            <person name="Tanase T.-O."/>
            <person name="Nomura Y."/>
            <person name="Togiya S."/>
            <person name="Komai F."/>
            <person name="Hara R."/>
            <person name="Takeuchi K."/>
            <person name="Arita M."/>
            <person name="Imose N."/>
            <person name="Musashino K."/>
            <person name="Yuuki H."/>
            <person name="Oshima A."/>
            <person name="Sasaki N."/>
            <person name="Aotsuka S."/>
            <person name="Yoshikawa Y."/>
            <person name="Matsunawa H."/>
            <person name="Ichihara T."/>
            <person name="Shiohata N."/>
            <person name="Sano S."/>
            <person name="Moriya S."/>
            <person name="Momiyama H."/>
            <person name="Satoh N."/>
            <person name="Takami S."/>
            <person name="Terashima Y."/>
            <person name="Suzuki O."/>
            <person name="Nakagawa S."/>
            <person name="Senoh A."/>
            <person name="Mizoguchi H."/>
            <person name="Goto Y."/>
            <person name="Shimizu F."/>
            <person name="Wakebe H."/>
            <person name="Hishigaki H."/>
            <person name="Watanabe T."/>
            <person name="Sugiyama A."/>
            <person name="Takemoto M."/>
            <person name="Kawakami B."/>
            <person name="Yamazaki M."/>
            <person name="Watanabe K."/>
            <person name="Kumagai A."/>
            <person name="Itakura S."/>
            <person name="Fukuzumi Y."/>
            <person name="Fujimori Y."/>
            <person name="Komiyama M."/>
            <person name="Tashiro H."/>
            <person name="Tanigami A."/>
            <person name="Fujiwara T."/>
            <person name="Ono T."/>
            <person name="Yamada K."/>
            <person name="Fujii Y."/>
            <person name="Ozaki K."/>
            <person name="Hirao M."/>
            <person name="Ohmori Y."/>
            <person name="Kawabata A."/>
            <person name="Hikiji T."/>
            <person name="Kobatake N."/>
            <person name="Inagaki H."/>
            <person name="Ikema Y."/>
            <person name="Okamoto S."/>
            <person name="Okitani R."/>
            <person name="Kawakami T."/>
            <person name="Noguchi S."/>
            <person name="Itoh T."/>
            <person name="Shigeta K."/>
            <person name="Senba T."/>
            <person name="Matsumura K."/>
            <person name="Nakajima Y."/>
            <person name="Mizuno T."/>
            <person name="Morinaga M."/>
            <person name="Sasaki M."/>
            <person name="Togashi T."/>
            <person name="Oyama M."/>
            <person name="Hata H."/>
            <person name="Watanabe M."/>
            <person name="Komatsu T."/>
            <person name="Mizushima-Sugano J."/>
            <person name="Satoh T."/>
            <person name="Shirai Y."/>
            <person name="Takahashi Y."/>
            <person name="Nakagawa K."/>
            <person name="Okumura K."/>
            <person name="Nagase T."/>
            <person name="Nomura N."/>
            <person name="Kikuchi H."/>
            <person name="Masuho Y."/>
            <person name="Yamashita R."/>
            <person name="Nakai K."/>
            <person name="Yada T."/>
            <person name="Nakamura Y."/>
            <person name="Ohara O."/>
            <person name="Isogai T."/>
            <person name="Sugano S."/>
        </authorList>
    </citation>
    <scope>NUCLEOTIDE SEQUENCE [LARGE SCALE MRNA] (ISOFORMS 1 AND 3)</scope>
    <scope>VARIANTS ALA-351; TYR-400; ALA-680 AND VAL-1059</scope>
    <source>
        <tissue>Lung</tissue>
        <tissue>Testis</tissue>
    </source>
</reference>
<reference key="3">
    <citation type="journal article" date="2003" name="Genome Res.">
        <title>Reevaluating human gene annotation: a second-generation analysis of chromosome 22.</title>
        <authorList>
            <person name="Collins J.E."/>
            <person name="Goward M.E."/>
            <person name="Cole C.G."/>
            <person name="Smink L.J."/>
            <person name="Huckle E.J."/>
            <person name="Knowles S."/>
            <person name="Bye J.M."/>
            <person name="Beare D.M."/>
            <person name="Dunham I."/>
        </authorList>
    </citation>
    <scope>NUCLEOTIDE SEQUENCE [LARGE SCALE MRNA] (ISOFORM 4)</scope>
</reference>
<reference key="4">
    <citation type="journal article" date="1999" name="Nature">
        <title>The DNA sequence of human chromosome 22.</title>
        <authorList>
            <person name="Dunham I."/>
            <person name="Hunt A.R."/>
            <person name="Collins J.E."/>
            <person name="Bruskiewich R."/>
            <person name="Beare D.M."/>
            <person name="Clamp M."/>
            <person name="Smink L.J."/>
            <person name="Ainscough R."/>
            <person name="Almeida J.P."/>
            <person name="Babbage A.K."/>
            <person name="Bagguley C."/>
            <person name="Bailey J."/>
            <person name="Barlow K.F."/>
            <person name="Bates K.N."/>
            <person name="Beasley O.P."/>
            <person name="Bird C.P."/>
            <person name="Blakey S.E."/>
            <person name="Bridgeman A.M."/>
            <person name="Buck D."/>
            <person name="Burgess J."/>
            <person name="Burrill W.D."/>
            <person name="Burton J."/>
            <person name="Carder C."/>
            <person name="Carter N.P."/>
            <person name="Chen Y."/>
            <person name="Clark G."/>
            <person name="Clegg S.M."/>
            <person name="Cobley V.E."/>
            <person name="Cole C.G."/>
            <person name="Collier R.E."/>
            <person name="Connor R."/>
            <person name="Conroy D."/>
            <person name="Corby N.R."/>
            <person name="Coville G.J."/>
            <person name="Cox A.V."/>
            <person name="Davis J."/>
            <person name="Dawson E."/>
            <person name="Dhami P.D."/>
            <person name="Dockree C."/>
            <person name="Dodsworth S.J."/>
            <person name="Durbin R.M."/>
            <person name="Ellington A.G."/>
            <person name="Evans K.L."/>
            <person name="Fey J.M."/>
            <person name="Fleming K."/>
            <person name="French L."/>
            <person name="Garner A.A."/>
            <person name="Gilbert J.G.R."/>
            <person name="Goward M.E."/>
            <person name="Grafham D.V."/>
            <person name="Griffiths M.N.D."/>
            <person name="Hall C."/>
            <person name="Hall R.E."/>
            <person name="Hall-Tamlyn G."/>
            <person name="Heathcott R.W."/>
            <person name="Ho S."/>
            <person name="Holmes S."/>
            <person name="Hunt S.E."/>
            <person name="Jones M.C."/>
            <person name="Kershaw J."/>
            <person name="Kimberley A.M."/>
            <person name="King A."/>
            <person name="Laird G.K."/>
            <person name="Langford C.F."/>
            <person name="Leversha M.A."/>
            <person name="Lloyd C."/>
            <person name="Lloyd D.M."/>
            <person name="Martyn I.D."/>
            <person name="Mashreghi-Mohammadi M."/>
            <person name="Matthews L.H."/>
            <person name="Mccann O.T."/>
            <person name="Mcclay J."/>
            <person name="Mclaren S."/>
            <person name="McMurray A.A."/>
            <person name="Milne S.A."/>
            <person name="Mortimore B.J."/>
            <person name="Odell C.N."/>
            <person name="Pavitt R."/>
            <person name="Pearce A.V."/>
            <person name="Pearson D."/>
            <person name="Phillimore B.J.C.T."/>
            <person name="Phillips S.H."/>
            <person name="Plumb R.W."/>
            <person name="Ramsay H."/>
            <person name="Ramsey Y."/>
            <person name="Rogers L."/>
            <person name="Ross M.T."/>
            <person name="Scott C.E."/>
            <person name="Sehra H.K."/>
            <person name="Skuce C.D."/>
            <person name="Smalley S."/>
            <person name="Smith M.L."/>
            <person name="Soderlund C."/>
            <person name="Spragon L."/>
            <person name="Steward C.A."/>
            <person name="Sulston J.E."/>
            <person name="Swann R.M."/>
            <person name="Vaudin M."/>
            <person name="Wall M."/>
            <person name="Wallis J.M."/>
            <person name="Whiteley M.N."/>
            <person name="Willey D.L."/>
            <person name="Williams L."/>
            <person name="Williams S.A."/>
            <person name="Williamson H."/>
            <person name="Wilmer T.E."/>
            <person name="Wilming L."/>
            <person name="Wright C.L."/>
            <person name="Hubbard T."/>
            <person name="Bentley D.R."/>
            <person name="Beck S."/>
            <person name="Rogers J."/>
            <person name="Shimizu N."/>
            <person name="Minoshima S."/>
            <person name="Kawasaki K."/>
            <person name="Sasaki T."/>
            <person name="Asakawa S."/>
            <person name="Kudoh J."/>
            <person name="Shintani A."/>
            <person name="Shibuya K."/>
            <person name="Yoshizaki Y."/>
            <person name="Aoki N."/>
            <person name="Mitsuyama S."/>
            <person name="Roe B.A."/>
            <person name="Chen F."/>
            <person name="Chu L."/>
            <person name="Crabtree J."/>
            <person name="Deschamps S."/>
            <person name="Do A."/>
            <person name="Do T."/>
            <person name="Dorman A."/>
            <person name="Fang F."/>
            <person name="Fu Y."/>
            <person name="Hu P."/>
            <person name="Hua A."/>
            <person name="Kenton S."/>
            <person name="Lai H."/>
            <person name="Lao H.I."/>
            <person name="Lewis J."/>
            <person name="Lewis S."/>
            <person name="Lin S.-P."/>
            <person name="Loh P."/>
            <person name="Malaj E."/>
            <person name="Nguyen T."/>
            <person name="Pan H."/>
            <person name="Phan S."/>
            <person name="Qi S."/>
            <person name="Qian Y."/>
            <person name="Ray L."/>
            <person name="Ren Q."/>
            <person name="Shaull S."/>
            <person name="Sloan D."/>
            <person name="Song L."/>
            <person name="Wang Q."/>
            <person name="Wang Y."/>
            <person name="Wang Z."/>
            <person name="White J."/>
            <person name="Willingham D."/>
            <person name="Wu H."/>
            <person name="Yao Z."/>
            <person name="Zhan M."/>
            <person name="Zhang G."/>
            <person name="Chissoe S."/>
            <person name="Murray J."/>
            <person name="Miller N."/>
            <person name="Minx P."/>
            <person name="Fulton R."/>
            <person name="Johnson D."/>
            <person name="Bemis G."/>
            <person name="Bentley D."/>
            <person name="Bradshaw H."/>
            <person name="Bourne S."/>
            <person name="Cordes M."/>
            <person name="Du Z."/>
            <person name="Fulton L."/>
            <person name="Goela D."/>
            <person name="Graves T."/>
            <person name="Hawkins J."/>
            <person name="Hinds K."/>
            <person name="Kemp K."/>
            <person name="Latreille P."/>
            <person name="Layman D."/>
            <person name="Ozersky P."/>
            <person name="Rohlfing T."/>
            <person name="Scheet P."/>
            <person name="Walker C."/>
            <person name="Wamsley A."/>
            <person name="Wohldmann P."/>
            <person name="Pepin K."/>
            <person name="Nelson J."/>
            <person name="Korf I."/>
            <person name="Bedell J.A."/>
            <person name="Hillier L.W."/>
            <person name="Mardis E."/>
            <person name="Waterston R."/>
            <person name="Wilson R."/>
            <person name="Emanuel B.S."/>
            <person name="Shaikh T."/>
            <person name="Kurahashi H."/>
            <person name="Saitta S."/>
            <person name="Budarf M.L."/>
            <person name="McDermid H.E."/>
            <person name="Johnson A."/>
            <person name="Wong A.C.C."/>
            <person name="Morrow B.E."/>
            <person name="Edelmann L."/>
            <person name="Kim U.J."/>
            <person name="Shizuya H."/>
            <person name="Simon M.I."/>
            <person name="Dumanski J.P."/>
            <person name="Peyrard M."/>
            <person name="Kedra D."/>
            <person name="Seroussi E."/>
            <person name="Fransson I."/>
            <person name="Tapia I."/>
            <person name="Bruder C.E."/>
            <person name="O'Brien K.P."/>
            <person name="Wilkinson P."/>
            <person name="Bodenteich A."/>
            <person name="Hartman K."/>
            <person name="Hu X."/>
            <person name="Khan A.S."/>
            <person name="Lane L."/>
            <person name="Tilahun Y."/>
            <person name="Wright H."/>
        </authorList>
    </citation>
    <scope>NUCLEOTIDE SEQUENCE [LARGE SCALE GENOMIC DNA]</scope>
</reference>
<reference key="5">
    <citation type="journal article" date="2004" name="Genome Res.">
        <title>The status, quality, and expansion of the NIH full-length cDNA project: the Mammalian Gene Collection (MGC).</title>
        <authorList>
            <consortium name="The MGC Project Team"/>
        </authorList>
    </citation>
    <scope>NUCLEOTIDE SEQUENCE [LARGE SCALE MRNA] (ISOFORM 2)</scope>
    <scope>VARIANT VAL-1059</scope>
    <source>
        <tissue>Testis</tissue>
    </source>
</reference>
<reference key="6">
    <citation type="journal article" date="2001" name="DNA Res.">
        <title>Identification of novel transcribed sequences on human chromosome 22 by expressed sequence tag mapping.</title>
        <authorList>
            <person name="Hirosawa M."/>
            <person name="Nagase T."/>
            <person name="Murahashi Y."/>
            <person name="Kikuno R."/>
            <person name="Ohara O."/>
        </authorList>
    </citation>
    <scope>NUCLEOTIDE SEQUENCE [LARGE SCALE MRNA] OF 855-1501 (ISOFORM 5)</scope>
    <source>
        <tissue>Brain</tissue>
    </source>
</reference>
<reference key="7">
    <citation type="submission" date="2005-08" db="PDB data bank">
        <title>Crystal structure of DJBP fragment which was obtained by limited proteolysis.</title>
        <authorList>
            <person name="Honbou K."/>
            <person name="Suzuki N.N."/>
            <person name="Horiuchi M."/>
            <person name="Taira T."/>
            <person name="Niki T."/>
            <person name="Ariga H."/>
            <person name="Inagaki F."/>
        </authorList>
    </citation>
    <scope>X-RAY CRYSTALLOGRAPHY (1.6 ANGSTROMS) OF 1160-1260</scope>
</reference>
<organism>
    <name type="scientific">Homo sapiens</name>
    <name type="common">Human</name>
    <dbReference type="NCBI Taxonomy" id="9606"/>
    <lineage>
        <taxon>Eukaryota</taxon>
        <taxon>Metazoa</taxon>
        <taxon>Chordata</taxon>
        <taxon>Craniata</taxon>
        <taxon>Vertebrata</taxon>
        <taxon>Euteleostomi</taxon>
        <taxon>Mammalia</taxon>
        <taxon>Eutheria</taxon>
        <taxon>Euarchontoglires</taxon>
        <taxon>Primates</taxon>
        <taxon>Haplorrhini</taxon>
        <taxon>Catarrhini</taxon>
        <taxon>Hominidae</taxon>
        <taxon>Homo</taxon>
    </lineage>
</organism>
<accession>Q5THR3</accession>
<accession>A8K8P6</accession>
<accession>A8K8Y3</accession>
<accession>B0QYI4</accession>
<accession>B0QYI6</accession>
<accession>Q5U5T6</accession>
<accession>Q9BY88</accession>
<accession>Q9H5C4</accession>
<accession>Q9NSF5</accession>
<sequence>MCKMAIIPDWLRSHPHTRKFTHSRPHSSPCRVYSRNGSPNKFRSSSTTAVANPTLSSLDVKRILFQKITDRGDELQKAFQLLDTGQNLTVSKSELRRIITDFLMPLTREQFQDVLAQIPLSTSGTVPYLAFLSRFGGIDLYINGIKRGGGNEMNCCRTLRELEIQVGEKVFKNIKTVMKAFELIDVNKTGLVRPQELRRVLETFCMKLRDEEYEKFSKHYNIHKDTAVDYNVFLKNLSINNDLNLRYCMGNQEVSLENQQAKNSKKERLLGSASSEDIWRNYSLDEIERNFCLQLSKSYEKVEKALSAGDPCKGGYVSFNYLKIVLDTFVYQIPRRIFIQLMKRFGLKATTKINWKQFLTSFHEPQGLQVSSKGPLTKRNSINSRNESHKENIITKLFRHTEDHSASLKKALLIINTKPDGPITREEFRYILNCMAVKLSDSEFKELMQMLDPGDTGVVNTSMFIDLIEENCRMRKTSPCTDAKTPFLLAWDSVEEIVHDTITRNLQAFYNMLRSYDLGDTGRIGRNNFKKIMHVFCPFLTNAHFIKLCSKIQDIGSGRILYKKLLACIGIDGPPTVSPVLVPKDQLLSEHLQKDEQQQPDLSERTKLTEDKTTLTKKMTTEEVIEKFKKCIQQQDPAFKKRFLDFSKEPNGKINVHDFKKVLEDTGMPMDDDQYALLTTKIGFEKEGMSYLDFAAGFEDPPMRGPETTPPQPPTPSKSYVNSHFITAEECLKLFPRRLKESFRDPYSAFFKTDADRDGIINMHDLHRLLLHLLLNLKDDEFERFLGLLGLRLSVTLNFREFQNLCEKRPWRTDEAPQRLIRPKQKVADSELACEQAHQYLVTKAKNRWSDLSKNFLETDNEGNGILRRRDIKNALYGFDIPLTPREFEKLWARYDTEGKGHITYQEFLQKLGINYSPAVHRPCAEDYFNFMGHFTKPQQLQEEMKELQQSTEKAVAARDKLMDRHQDISKAFTKTDQSKTNYISICKMQEVLEECGCSLTEGELTHLLNSWGVSRHDNAINYLDFLRAVENSKSTGAQPKEKEESMPINFATLNPQEAVRKIQEVVESSQLALSTAFSALDKEDTGFVKATEFGQVLKDFCYKLTDNQYHYFLRKLRIHLTPYINWKYFLQNFSCFLEETADEWAEKMPKGPPPTSPKATADRDILARLHKAVTSHYHAITQEFENFDTMKTNTISREEFRAICNRRVQILTDEQFDRLWNEMPVNAKGRLKYPDFLSRFSSETAATPMATGDSAVAQRGSSVPDVSEGTRSALSLPTQELRPGSKSQSHPCTPASTTVIPGTPPLQNCDPIESRLRKRIQGCWRQLLKECKEKDVARQGDINASDFLALVEKFNLDISKEECQQLIIKYDLKSNGKFAYCDFIQSCVLLLKAKESSLMHRMKIQNAHKMKEAGAETPSFYSALLRIQPKIVHCWRPMRRTFKSYDEAGTGLLSVADFRTVLRQYSINLSEEEFFHILEYYDKTLSSKISYNDFLRAFLQ</sequence>
<comment type="function">
    <text evidence="1 4">Negatively regulates the androgen receptor by recruiting histone deacetylase complex, and protein DJ-1 antagonizes this inhibition by abrogation of this complex (PubMed:12612053). Microtubule inner protein (MIP) part of the dynein-decorated doublet microtubules (DMTs) in cilia axoneme, which is required for motile cilia beating (By similarity).</text>
</comment>
<comment type="subunit">
    <text evidence="1 4">Microtubule inner protein component of sperm flagellar doublet microtubules (By similarity). Binds PARK7 (PubMed:12612053). Part of a ternary complex containing PARK7, EFCAB6/DJBP and AR (PubMed:12612053).</text>
</comment>
<comment type="interaction">
    <interactant intactId="EBI-12282559">
        <id>Q5THR3-2</id>
    </interactant>
    <interactant intactId="EBI-618309">
        <id>Q08379</id>
        <label>GOLGA2</label>
    </interactant>
    <organismsDiffer>false</organismsDiffer>
    <experiments>3</experiments>
</comment>
<comment type="subcellular location">
    <subcellularLocation>
        <location evidence="4">Nucleus</location>
    </subcellularLocation>
    <subcellularLocation>
        <location evidence="1">Cytoplasm</location>
        <location evidence="1">Cytoskeleton</location>
        <location evidence="1">Flagellum axoneme</location>
    </subcellularLocation>
</comment>
<comment type="alternative products">
    <event type="alternative splicing"/>
    <isoform>
        <id>Q5THR3-1</id>
        <name>1</name>
        <sequence type="displayed"/>
    </isoform>
    <isoform>
        <id>Q5THR3-2</id>
        <name>2</name>
        <name>Isoform b</name>
        <sequence type="described" ref="VSP_019810"/>
    </isoform>
    <isoform>
        <id>Q5THR3-3</id>
        <name>3</name>
        <sequence type="described" ref="VSP_019809"/>
    </isoform>
    <isoform>
        <id>Q5THR3-4</id>
        <name>4</name>
        <sequence type="described" ref="VSP_019808 VSP_019811"/>
    </isoform>
    <isoform>
        <id>Q5THR3-6</id>
        <name>6</name>
        <sequence type="described" ref="VSP_034831 VSP_034832"/>
    </isoform>
    <isoform>
        <id>Q5THR3-5</id>
        <name>5</name>
        <sequence type="described" ref="VSP_019812 VSP_019813"/>
    </isoform>
</comment>
<comment type="tissue specificity">
    <text evidence="4">Specifically expressed in the testis.</text>
</comment>
<feature type="chain" id="PRO_0000246024" description="EF-hand calcium-binding domain-containing protein 6">
    <location>
        <begin position="1"/>
        <end position="1501"/>
    </location>
</feature>
<feature type="domain" description="EF-hand 1" evidence="2">
    <location>
        <begin position="70"/>
        <end position="105"/>
    </location>
</feature>
<feature type="domain" description="EF-hand 2" evidence="2">
    <location>
        <begin position="172"/>
        <end position="207"/>
    </location>
</feature>
<feature type="domain" description="EF-hand 3" evidence="2">
    <location>
        <begin position="297"/>
        <end position="332"/>
    </location>
</feature>
<feature type="domain" description="EF-hand 4" evidence="2">
    <location>
        <begin position="403"/>
        <end position="438"/>
    </location>
</feature>
<feature type="domain" description="EF-hand 5" evidence="2">
    <location>
        <begin position="439"/>
        <end position="474"/>
    </location>
</feature>
<feature type="domain" description="EF-hand 6" evidence="2">
    <location>
        <begin position="504"/>
        <end position="539"/>
    </location>
</feature>
<feature type="domain" description="EF-hand 7" evidence="2">
    <location>
        <begin position="634"/>
        <end position="669"/>
    </location>
</feature>
<feature type="domain" description="EF-hand 8" evidence="2">
    <location>
        <begin position="741"/>
        <end position="776"/>
    </location>
</feature>
<feature type="domain" description="EF-hand 9" evidence="2">
    <location>
        <begin position="847"/>
        <end position="882"/>
    </location>
</feature>
<feature type="domain" description="EF-hand 10" evidence="2">
    <location>
        <begin position="883"/>
        <end position="918"/>
    </location>
</feature>
<feature type="domain" description="EF-hand 11" evidence="2">
    <location>
        <begin position="964"/>
        <end position="999"/>
    </location>
</feature>
<feature type="domain" description="EF-hand 12" evidence="2">
    <location>
        <begin position="1069"/>
        <end position="1104"/>
    </location>
</feature>
<feature type="domain" description="EF-hand 13" evidence="2">
    <location>
        <begin position="1176"/>
        <end position="1211"/>
    </location>
</feature>
<feature type="domain" description="EF-hand 14" evidence="2">
    <location>
        <begin position="1212"/>
        <end position="1247"/>
    </location>
</feature>
<feature type="domain" description="EF-hand 15" evidence="2">
    <location>
        <begin position="1359"/>
        <end position="1394"/>
    </location>
</feature>
<feature type="domain" description="EF-hand 16" evidence="2">
    <location>
        <begin position="1434"/>
        <end position="1469"/>
    </location>
</feature>
<feature type="domain" description="EF-hand 17" evidence="2">
    <location>
        <begin position="1470"/>
        <end position="1501"/>
    </location>
</feature>
<feature type="region of interest" description="Disordered" evidence="3">
    <location>
        <begin position="18"/>
        <end position="47"/>
    </location>
</feature>
<feature type="region of interest" description="Disordered" evidence="3">
    <location>
        <begin position="699"/>
        <end position="718"/>
    </location>
</feature>
<feature type="region of interest" description="Disordered" evidence="3">
    <location>
        <begin position="1246"/>
        <end position="1307"/>
    </location>
</feature>
<feature type="region of interest" description="Interaction with PARK7" evidence="4">
    <location>
        <begin position="1303"/>
        <end position="1501"/>
    </location>
</feature>
<feature type="region of interest" description="Interaction with AR" evidence="4">
    <location>
        <begin position="1407"/>
        <end position="1501"/>
    </location>
</feature>
<feature type="compositionally biased region" description="Polar residues" evidence="3">
    <location>
        <begin position="35"/>
        <end position="47"/>
    </location>
</feature>
<feature type="compositionally biased region" description="Polar residues" evidence="3">
    <location>
        <begin position="1270"/>
        <end position="1279"/>
    </location>
</feature>
<feature type="compositionally biased region" description="Polar residues" evidence="3">
    <location>
        <begin position="1286"/>
        <end position="1301"/>
    </location>
</feature>
<feature type="binding site" evidence="2">
    <location>
        <position position="754"/>
    </location>
    <ligand>
        <name>Ca(2+)</name>
        <dbReference type="ChEBI" id="CHEBI:29108"/>
    </ligand>
</feature>
<feature type="binding site" evidence="2">
    <location>
        <position position="756"/>
    </location>
    <ligand>
        <name>Ca(2+)</name>
        <dbReference type="ChEBI" id="CHEBI:29108"/>
    </ligand>
</feature>
<feature type="binding site" evidence="2">
    <location>
        <position position="758"/>
    </location>
    <ligand>
        <name>Ca(2+)</name>
        <dbReference type="ChEBI" id="CHEBI:29108"/>
    </ligand>
</feature>
<feature type="binding site" evidence="2">
    <location>
        <position position="765"/>
    </location>
    <ligand>
        <name>Ca(2+)</name>
        <dbReference type="ChEBI" id="CHEBI:29108"/>
    </ligand>
</feature>
<feature type="modified residue" description="Phosphothreonine" evidence="1">
    <location>
        <position position="884"/>
    </location>
</feature>
<feature type="modified residue" description="Phosphoserine" evidence="1">
    <location>
        <position position="1290"/>
    </location>
</feature>
<feature type="modified residue" description="Phosphothreonine" evidence="1">
    <location>
        <position position="1294"/>
    </location>
</feature>
<feature type="modified residue" description="Phosphothreonine" evidence="1">
    <location>
        <position position="1304"/>
    </location>
</feature>
<feature type="splice variant" id="VSP_019808" description="In isoform 4." evidence="8">
    <location>
        <begin position="1"/>
        <end position="1139"/>
    </location>
</feature>
<feature type="splice variant" id="VSP_019809" description="In isoform 3." evidence="9 10">
    <location>
        <begin position="1"/>
        <end position="931"/>
    </location>
</feature>
<feature type="splice variant" id="VSP_019810" description="In isoform 2." evidence="11">
    <location>
        <begin position="1"/>
        <end position="152"/>
    </location>
</feature>
<feature type="splice variant" id="VSP_034831" description="In isoform 6." evidence="12">
    <original>KPD</original>
    <variation>VRF</variation>
    <location>
        <begin position="418"/>
        <end position="420"/>
    </location>
</feature>
<feature type="splice variant" id="VSP_034832" description="In isoform 6." evidence="12">
    <location>
        <begin position="421"/>
        <end position="1501"/>
    </location>
</feature>
<feature type="splice variant" id="VSP_019811" description="In isoform 4." evidence="8">
    <original>E</original>
    <variation>M</variation>
    <location>
        <position position="1140"/>
    </location>
</feature>
<feature type="splice variant" id="VSP_019812" description="In isoform 5." evidence="7">
    <original>FDRLWNEMPVNAKGRLKYPDFLSRFSSETAATP</original>
    <variation>VRNASQSSPCTPLAERQPGPWPECTEFKTVLYF</variation>
    <location>
        <begin position="1217"/>
        <end position="1249"/>
    </location>
</feature>
<feature type="splice variant" id="VSP_019813" description="In isoform 5." evidence="7">
    <location>
        <begin position="1250"/>
        <end position="1501"/>
    </location>
</feature>
<feature type="sequence variant" id="VAR_048648" description="In dbSNP:rs16990981.">
    <original>V</original>
    <variation>A</variation>
    <location>
        <position position="166"/>
    </location>
</feature>
<feature type="sequence variant" id="VAR_048649" description="In dbSNP:rs3747203.">
    <original>R</original>
    <variation>G</variation>
    <location>
        <position position="199"/>
    </location>
</feature>
<feature type="sequence variant" id="VAR_048650" description="In dbSNP:rs5764214." evidence="5">
    <original>T</original>
    <variation>A</variation>
    <location>
        <position position="351"/>
    </location>
</feature>
<feature type="sequence variant" id="VAR_048651" description="In dbSNP:rs6006438.">
    <original>S</original>
    <variation>A</variation>
    <location>
        <position position="384"/>
    </location>
</feature>
<feature type="sequence variant" id="VAR_048652" description="In dbSNP:rs137794." evidence="5">
    <original>H</original>
    <variation>Y</variation>
    <location>
        <position position="400"/>
    </location>
</feature>
<feature type="sequence variant" id="VAR_048653" description="In dbSNP:rs137731." evidence="5">
    <original>T</original>
    <variation>A</variation>
    <location>
        <position position="680"/>
    </location>
</feature>
<feature type="sequence variant" id="VAR_048654" description="In dbSNP:rs12159591.">
    <original>D</original>
    <variation>N</variation>
    <location>
        <position position="780"/>
    </location>
</feature>
<feature type="sequence variant" id="VAR_048655" description="In dbSNP:rs6006514.">
    <original>R</original>
    <variation>W</variation>
    <location>
        <position position="800"/>
    </location>
</feature>
<feature type="sequence variant" id="VAR_048656" description="In dbSNP:rs9614382." evidence="4 5 6">
    <original>A</original>
    <variation>V</variation>
    <location>
        <position position="1059"/>
    </location>
</feature>
<feature type="sequence conflict" description="In Ref. 2; BAF85187." evidence="12" ref="2">
    <original>S</original>
    <variation>P</variation>
    <location>
        <position position="478"/>
    </location>
</feature>
<feature type="sequence conflict" description="In Ref. 2; BAF85187." evidence="12" ref="2">
    <original>I</original>
    <variation>V</variation>
    <location>
        <position position="726"/>
    </location>
</feature>
<feature type="sequence conflict" description="In Ref. 2; BAF85187." evidence="12" ref="2">
    <original>A</original>
    <variation>V</variation>
    <location>
        <position position="833"/>
    </location>
</feature>
<feature type="sequence conflict" description="In Ref. 2; BAF85100." evidence="12" ref="2">
    <original>P</original>
    <variation>S</variation>
    <location>
        <position position="882"/>
    </location>
</feature>
<feature type="sequence conflict" description="In Ref. 1; BAB71780 and 2; BAB15703." evidence="12" ref="1 2">
    <original>Q</original>
    <variation>H</variation>
    <location>
        <position position="990"/>
    </location>
</feature>
<feature type="sequence conflict" description="In Ref. 5; AAH39315." evidence="12" ref="5">
    <original>D</original>
    <variation>G</variation>
    <location>
        <position position="1082"/>
    </location>
</feature>
<feature type="sequence conflict" description="In Ref. 2; BAF85100." evidence="12" ref="2">
    <original>E</original>
    <variation>G</variation>
    <location>
        <position position="1139"/>
    </location>
</feature>
<feature type="sequence conflict" description="In Ref. 2; BAF85187." evidence="12" ref="2">
    <original>T</original>
    <variation>P</variation>
    <location>
        <position position="1182"/>
    </location>
</feature>
<feature type="sequence conflict" description="In Ref. 5; AAH39315." evidence="12" ref="5">
    <original>D</original>
    <variation>G</variation>
    <location>
        <position position="1218"/>
    </location>
</feature>
<feature type="helix" evidence="14">
    <location>
        <begin position="1164"/>
        <end position="1176"/>
    </location>
</feature>
<feature type="helix" evidence="14">
    <location>
        <begin position="1178"/>
        <end position="1188"/>
    </location>
</feature>
<feature type="strand" evidence="15">
    <location>
        <begin position="1194"/>
        <end position="1196"/>
    </location>
</feature>
<feature type="helix" evidence="14">
    <location>
        <begin position="1198"/>
        <end position="1208"/>
    </location>
</feature>
<feature type="helix" evidence="14">
    <location>
        <begin position="1214"/>
        <end position="1221"/>
    </location>
</feature>
<feature type="helix" evidence="14">
    <location>
        <begin position="1234"/>
        <end position="1241"/>
    </location>
</feature>